<evidence type="ECO:0000255" key="1">
    <source>
        <dbReference type="HAMAP-Rule" id="MF_00190"/>
    </source>
</evidence>
<name>CLSA_ERWT9</name>
<organism>
    <name type="scientific">Erwinia tasmaniensis (strain DSM 17950 / CFBP 7177 / CIP 109463 / NCPPB 4357 / Et1/99)</name>
    <dbReference type="NCBI Taxonomy" id="465817"/>
    <lineage>
        <taxon>Bacteria</taxon>
        <taxon>Pseudomonadati</taxon>
        <taxon>Pseudomonadota</taxon>
        <taxon>Gammaproteobacteria</taxon>
        <taxon>Enterobacterales</taxon>
        <taxon>Erwiniaceae</taxon>
        <taxon>Erwinia</taxon>
    </lineage>
</organism>
<protein>
    <recommendedName>
        <fullName evidence="1">Cardiolipin synthase A</fullName>
        <shortName evidence="1">CL synthase</shortName>
        <ecNumber evidence="1">2.7.8.-</ecNumber>
    </recommendedName>
</protein>
<dbReference type="EC" id="2.7.8.-" evidence="1"/>
<dbReference type="EMBL" id="CU468135">
    <property type="protein sequence ID" value="CAO96636.1"/>
    <property type="molecule type" value="Genomic_DNA"/>
</dbReference>
<dbReference type="RefSeq" id="WP_012441329.1">
    <property type="nucleotide sequence ID" value="NC_010694.1"/>
</dbReference>
<dbReference type="SMR" id="B2VKV4"/>
<dbReference type="STRING" id="465817.ETA_15900"/>
<dbReference type="KEGG" id="eta:ETA_15900"/>
<dbReference type="eggNOG" id="COG1502">
    <property type="taxonomic scope" value="Bacteria"/>
</dbReference>
<dbReference type="HOGENOM" id="CLU_038053_1_0_6"/>
<dbReference type="OrthoDB" id="9814092at2"/>
<dbReference type="Proteomes" id="UP000001726">
    <property type="component" value="Chromosome"/>
</dbReference>
<dbReference type="GO" id="GO:0005886">
    <property type="term" value="C:plasma membrane"/>
    <property type="evidence" value="ECO:0007669"/>
    <property type="project" value="UniProtKB-SubCell"/>
</dbReference>
<dbReference type="GO" id="GO:0008808">
    <property type="term" value="F:cardiolipin synthase activity"/>
    <property type="evidence" value="ECO:0007669"/>
    <property type="project" value="InterPro"/>
</dbReference>
<dbReference type="GO" id="GO:0032049">
    <property type="term" value="P:cardiolipin biosynthetic process"/>
    <property type="evidence" value="ECO:0007669"/>
    <property type="project" value="InterPro"/>
</dbReference>
<dbReference type="CDD" id="cd09152">
    <property type="entry name" value="PLDc_EcCLS_like_1"/>
    <property type="match status" value="1"/>
</dbReference>
<dbReference type="CDD" id="cd09158">
    <property type="entry name" value="PLDc_EcCLS_like_2"/>
    <property type="match status" value="1"/>
</dbReference>
<dbReference type="FunFam" id="3.30.870.10:FF:000002">
    <property type="entry name" value="Cardiolipin synthase A"/>
    <property type="match status" value="1"/>
</dbReference>
<dbReference type="FunFam" id="3.30.870.10:FF:000003">
    <property type="entry name" value="Cardiolipin synthase A"/>
    <property type="match status" value="1"/>
</dbReference>
<dbReference type="Gene3D" id="3.30.870.10">
    <property type="entry name" value="Endonuclease Chain A"/>
    <property type="match status" value="2"/>
</dbReference>
<dbReference type="HAMAP" id="MF_00190">
    <property type="entry name" value="Cardiolipin_synth_ClsA"/>
    <property type="match status" value="1"/>
</dbReference>
<dbReference type="InterPro" id="IPR022924">
    <property type="entry name" value="Cardiolipin_synthase"/>
</dbReference>
<dbReference type="InterPro" id="IPR030840">
    <property type="entry name" value="CL_synthase_A"/>
</dbReference>
<dbReference type="InterPro" id="IPR027379">
    <property type="entry name" value="CLS_N"/>
</dbReference>
<dbReference type="InterPro" id="IPR025202">
    <property type="entry name" value="PLD-like_dom"/>
</dbReference>
<dbReference type="InterPro" id="IPR001736">
    <property type="entry name" value="PLipase_D/transphosphatidylase"/>
</dbReference>
<dbReference type="NCBIfam" id="TIGR04265">
    <property type="entry name" value="bac_cardiolipin"/>
    <property type="match status" value="1"/>
</dbReference>
<dbReference type="PANTHER" id="PTHR21248">
    <property type="entry name" value="CARDIOLIPIN SYNTHASE"/>
    <property type="match status" value="1"/>
</dbReference>
<dbReference type="PANTHER" id="PTHR21248:SF22">
    <property type="entry name" value="PHOSPHOLIPASE D"/>
    <property type="match status" value="1"/>
</dbReference>
<dbReference type="Pfam" id="PF13091">
    <property type="entry name" value="PLDc_2"/>
    <property type="match status" value="2"/>
</dbReference>
<dbReference type="Pfam" id="PF13396">
    <property type="entry name" value="PLDc_N"/>
    <property type="match status" value="1"/>
</dbReference>
<dbReference type="SMART" id="SM00155">
    <property type="entry name" value="PLDc"/>
    <property type="match status" value="2"/>
</dbReference>
<dbReference type="SUPFAM" id="SSF56024">
    <property type="entry name" value="Phospholipase D/nuclease"/>
    <property type="match status" value="2"/>
</dbReference>
<dbReference type="PROSITE" id="PS50035">
    <property type="entry name" value="PLD"/>
    <property type="match status" value="2"/>
</dbReference>
<comment type="function">
    <text evidence="1">Catalyzes the reversible phosphatidyl group transfer from one phosphatidylglycerol molecule to another to form cardiolipin (CL) (diphosphatidylglycerol) and glycerol.</text>
</comment>
<comment type="catalytic activity">
    <reaction evidence="1">
        <text>2 a 1,2-diacyl-sn-glycero-3-phospho-(1'-sn-glycerol) = a cardiolipin + glycerol</text>
        <dbReference type="Rhea" id="RHEA:31451"/>
        <dbReference type="ChEBI" id="CHEBI:17754"/>
        <dbReference type="ChEBI" id="CHEBI:62237"/>
        <dbReference type="ChEBI" id="CHEBI:64716"/>
    </reaction>
</comment>
<comment type="subcellular location">
    <subcellularLocation>
        <location evidence="1">Cell inner membrane</location>
        <topology evidence="1">Multi-pass membrane protein</topology>
    </subcellularLocation>
</comment>
<comment type="similarity">
    <text evidence="1">Belongs to the phospholipase D family. Cardiolipin synthase subfamily. ClsA sub-subfamily.</text>
</comment>
<proteinExistence type="inferred from homology"/>
<accession>B2VKV4</accession>
<feature type="chain" id="PRO_1000098907" description="Cardiolipin synthase A">
    <location>
        <begin position="1"/>
        <end position="486"/>
    </location>
</feature>
<feature type="transmembrane region" description="Helical" evidence="1">
    <location>
        <begin position="3"/>
        <end position="23"/>
    </location>
</feature>
<feature type="transmembrane region" description="Helical" evidence="1">
    <location>
        <begin position="38"/>
        <end position="58"/>
    </location>
</feature>
<feature type="domain" description="PLD phosphodiesterase 1" evidence="1">
    <location>
        <begin position="219"/>
        <end position="246"/>
    </location>
</feature>
<feature type="domain" description="PLD phosphodiesterase 2" evidence="1">
    <location>
        <begin position="399"/>
        <end position="426"/>
    </location>
</feature>
<feature type="active site" evidence="1">
    <location>
        <position position="224"/>
    </location>
</feature>
<feature type="active site" evidence="1">
    <location>
        <position position="226"/>
    </location>
</feature>
<feature type="active site" evidence="1">
    <location>
        <position position="231"/>
    </location>
</feature>
<feature type="active site" evidence="1">
    <location>
        <position position="404"/>
    </location>
</feature>
<feature type="active site" evidence="1">
    <location>
        <position position="406"/>
    </location>
</feature>
<feature type="active site" evidence="1">
    <location>
        <position position="411"/>
    </location>
</feature>
<sequence>MTTFYTVMSWLLVFGYWLLIAGVTLRILMKRRAVPSAMAWLLIIYILPLVGIIAYLSLGELHLGKRRAERARTMWPSTARWLNDLKSSHHIFAKENSDVAQALFQLCEKRQGIAGVKGNQLQLLTSTDETLSTLVRDIELARHNIEMVFYIWQPGGHADDVAEALMAAARRGVHCRLLLDSAGSVTFFRSPWPAMMRNAGVDVVEALRVSLLRVFLRRMDLRQHRKVVLIDNYIAYTGSMNLVDPRFFKQNAGVGQWVDLMARMEGPVATTMGIIYSCDWEIETGRRILPPPPDDNVMPFEQESGHTIQVIASGPGFPEDMIHQALLTAVYSAREQLIMTTPYLVPSDDLLHAICTAAYRGVEVSIIVPRHIDSMLVRWASRAFFGELLAAGVKIYQFEGGLLHSKSILVDGQLSLVGTVNLDMRSLWLNFEITLVIDDDGFGSDLARVQEDYIARSRLVDAKRWAHRAYWQRIVERLFYFFSPLL</sequence>
<keyword id="KW-0997">Cell inner membrane</keyword>
<keyword id="KW-1003">Cell membrane</keyword>
<keyword id="KW-0444">Lipid biosynthesis</keyword>
<keyword id="KW-0443">Lipid metabolism</keyword>
<keyword id="KW-0472">Membrane</keyword>
<keyword id="KW-0594">Phospholipid biosynthesis</keyword>
<keyword id="KW-1208">Phospholipid metabolism</keyword>
<keyword id="KW-1185">Reference proteome</keyword>
<keyword id="KW-0677">Repeat</keyword>
<keyword id="KW-0808">Transferase</keyword>
<keyword id="KW-0812">Transmembrane</keyword>
<keyword id="KW-1133">Transmembrane helix</keyword>
<reference key="1">
    <citation type="journal article" date="2008" name="Environ. Microbiol.">
        <title>The genome of Erwinia tasmaniensis strain Et1/99, a non-pathogenic bacterium in the genus Erwinia.</title>
        <authorList>
            <person name="Kube M."/>
            <person name="Migdoll A.M."/>
            <person name="Mueller I."/>
            <person name="Kuhl H."/>
            <person name="Beck A."/>
            <person name="Reinhardt R."/>
            <person name="Geider K."/>
        </authorList>
    </citation>
    <scope>NUCLEOTIDE SEQUENCE [LARGE SCALE GENOMIC DNA]</scope>
    <source>
        <strain>DSM 17950 / CFBP 7177 / CIP 109463 / NCPPB 4357 / Et1/99</strain>
    </source>
</reference>
<gene>
    <name evidence="1" type="primary">clsA</name>
    <name type="synonym">cls</name>
    <name type="ordered locus">ETA_15900</name>
</gene>